<evidence type="ECO:0000255" key="1">
    <source>
        <dbReference type="HAMAP-Rule" id="MF_00382"/>
    </source>
</evidence>
<evidence type="ECO:0000305" key="2"/>
<keyword id="KW-1185">Reference proteome</keyword>
<keyword id="KW-0687">Ribonucleoprotein</keyword>
<keyword id="KW-0689">Ribosomal protein</keyword>
<keyword id="KW-0694">RNA-binding</keyword>
<keyword id="KW-0699">rRNA-binding</keyword>
<accession>Q2RNH9</accession>
<organism>
    <name type="scientific">Rhodospirillum rubrum (strain ATCC 11170 / ATH 1.1.1 / DSM 467 / LMG 4362 / NCIMB 8255 / S1)</name>
    <dbReference type="NCBI Taxonomy" id="269796"/>
    <lineage>
        <taxon>Bacteria</taxon>
        <taxon>Pseudomonadati</taxon>
        <taxon>Pseudomonadota</taxon>
        <taxon>Alphaproteobacteria</taxon>
        <taxon>Rhodospirillales</taxon>
        <taxon>Rhodospirillaceae</taxon>
        <taxon>Rhodospirillum</taxon>
    </lineage>
</organism>
<name>RL20_RHORT</name>
<protein>
    <recommendedName>
        <fullName evidence="1">Large ribosomal subunit protein bL20</fullName>
    </recommendedName>
    <alternativeName>
        <fullName evidence="2">50S ribosomal protein L20</fullName>
    </alternativeName>
</protein>
<gene>
    <name evidence="1" type="primary">rplT</name>
    <name type="ordered locus">Rru_A3522</name>
</gene>
<dbReference type="EMBL" id="CP000230">
    <property type="protein sequence ID" value="ABC24316.1"/>
    <property type="molecule type" value="Genomic_DNA"/>
</dbReference>
<dbReference type="RefSeq" id="WP_011391269.1">
    <property type="nucleotide sequence ID" value="NC_007643.1"/>
</dbReference>
<dbReference type="RefSeq" id="YP_428603.1">
    <property type="nucleotide sequence ID" value="NC_007643.1"/>
</dbReference>
<dbReference type="SMR" id="Q2RNH9"/>
<dbReference type="STRING" id="269796.Rru_A3522"/>
<dbReference type="EnsemblBacteria" id="ABC24316">
    <property type="protein sequence ID" value="ABC24316"/>
    <property type="gene ID" value="Rru_A3522"/>
</dbReference>
<dbReference type="KEGG" id="rru:Rru_A3522"/>
<dbReference type="PATRIC" id="fig|269796.9.peg.3639"/>
<dbReference type="eggNOG" id="COG0292">
    <property type="taxonomic scope" value="Bacteria"/>
</dbReference>
<dbReference type="HOGENOM" id="CLU_123265_0_1_5"/>
<dbReference type="PhylomeDB" id="Q2RNH9"/>
<dbReference type="Proteomes" id="UP000001929">
    <property type="component" value="Chromosome"/>
</dbReference>
<dbReference type="GO" id="GO:1990904">
    <property type="term" value="C:ribonucleoprotein complex"/>
    <property type="evidence" value="ECO:0007669"/>
    <property type="project" value="UniProtKB-KW"/>
</dbReference>
<dbReference type="GO" id="GO:0005840">
    <property type="term" value="C:ribosome"/>
    <property type="evidence" value="ECO:0007669"/>
    <property type="project" value="UniProtKB-KW"/>
</dbReference>
<dbReference type="GO" id="GO:0019843">
    <property type="term" value="F:rRNA binding"/>
    <property type="evidence" value="ECO:0007669"/>
    <property type="project" value="UniProtKB-UniRule"/>
</dbReference>
<dbReference type="GO" id="GO:0003735">
    <property type="term" value="F:structural constituent of ribosome"/>
    <property type="evidence" value="ECO:0007669"/>
    <property type="project" value="InterPro"/>
</dbReference>
<dbReference type="GO" id="GO:0000027">
    <property type="term" value="P:ribosomal large subunit assembly"/>
    <property type="evidence" value="ECO:0007669"/>
    <property type="project" value="UniProtKB-UniRule"/>
</dbReference>
<dbReference type="GO" id="GO:0006412">
    <property type="term" value="P:translation"/>
    <property type="evidence" value="ECO:0007669"/>
    <property type="project" value="InterPro"/>
</dbReference>
<dbReference type="CDD" id="cd07026">
    <property type="entry name" value="Ribosomal_L20"/>
    <property type="match status" value="1"/>
</dbReference>
<dbReference type="FunFam" id="1.10.1900.20:FF:000001">
    <property type="entry name" value="50S ribosomal protein L20"/>
    <property type="match status" value="1"/>
</dbReference>
<dbReference type="Gene3D" id="6.10.160.10">
    <property type="match status" value="1"/>
</dbReference>
<dbReference type="Gene3D" id="1.10.1900.20">
    <property type="entry name" value="Ribosomal protein L20"/>
    <property type="match status" value="1"/>
</dbReference>
<dbReference type="HAMAP" id="MF_00382">
    <property type="entry name" value="Ribosomal_bL20"/>
    <property type="match status" value="1"/>
</dbReference>
<dbReference type="InterPro" id="IPR005813">
    <property type="entry name" value="Ribosomal_bL20"/>
</dbReference>
<dbReference type="InterPro" id="IPR049946">
    <property type="entry name" value="RIBOSOMAL_L20_CS"/>
</dbReference>
<dbReference type="InterPro" id="IPR035566">
    <property type="entry name" value="Ribosomal_protein_bL20_C"/>
</dbReference>
<dbReference type="NCBIfam" id="TIGR01032">
    <property type="entry name" value="rplT_bact"/>
    <property type="match status" value="1"/>
</dbReference>
<dbReference type="PANTHER" id="PTHR10986">
    <property type="entry name" value="39S RIBOSOMAL PROTEIN L20"/>
    <property type="match status" value="1"/>
</dbReference>
<dbReference type="Pfam" id="PF00453">
    <property type="entry name" value="Ribosomal_L20"/>
    <property type="match status" value="1"/>
</dbReference>
<dbReference type="PRINTS" id="PR00062">
    <property type="entry name" value="RIBOSOMALL20"/>
</dbReference>
<dbReference type="SUPFAM" id="SSF74731">
    <property type="entry name" value="Ribosomal protein L20"/>
    <property type="match status" value="1"/>
</dbReference>
<dbReference type="PROSITE" id="PS00937">
    <property type="entry name" value="RIBOSOMAL_L20"/>
    <property type="match status" value="1"/>
</dbReference>
<reference key="1">
    <citation type="journal article" date="2011" name="Stand. Genomic Sci.">
        <title>Complete genome sequence of Rhodospirillum rubrum type strain (S1).</title>
        <authorList>
            <person name="Munk A.C."/>
            <person name="Copeland A."/>
            <person name="Lucas S."/>
            <person name="Lapidus A."/>
            <person name="Del Rio T.G."/>
            <person name="Barry K."/>
            <person name="Detter J.C."/>
            <person name="Hammon N."/>
            <person name="Israni S."/>
            <person name="Pitluck S."/>
            <person name="Brettin T."/>
            <person name="Bruce D."/>
            <person name="Han C."/>
            <person name="Tapia R."/>
            <person name="Gilna P."/>
            <person name="Schmutz J."/>
            <person name="Larimer F."/>
            <person name="Land M."/>
            <person name="Kyrpides N.C."/>
            <person name="Mavromatis K."/>
            <person name="Richardson P."/>
            <person name="Rohde M."/>
            <person name="Goeker M."/>
            <person name="Klenk H.P."/>
            <person name="Zhang Y."/>
            <person name="Roberts G.P."/>
            <person name="Reslewic S."/>
            <person name="Schwartz D.C."/>
        </authorList>
    </citation>
    <scope>NUCLEOTIDE SEQUENCE [LARGE SCALE GENOMIC DNA]</scope>
    <source>
        <strain>ATCC 11170 / ATH 1.1.1 / DSM 467 / LMG 4362 / NCIMB 8255 / S1</strain>
    </source>
</reference>
<proteinExistence type="inferred from homology"/>
<feature type="chain" id="PRO_0000243727" description="Large ribosomal subunit protein bL20">
    <location>
        <begin position="1"/>
        <end position="125"/>
    </location>
</feature>
<sequence>MSRATNAKTNHARHKKVLDLAKGYRGRNSTNFRIAIEKVEKGLQYAYRDRRAKKRNFRSLWIQRINAGAREQGLTYSQFINGLIRAGIELDRKILADLAVTEPAAFASLVAQAKAALDTTAEQAA</sequence>
<comment type="function">
    <text evidence="1">Binds directly to 23S ribosomal RNA and is necessary for the in vitro assembly process of the 50S ribosomal subunit. It is not involved in the protein synthesizing functions of that subunit.</text>
</comment>
<comment type="similarity">
    <text evidence="1">Belongs to the bacterial ribosomal protein bL20 family.</text>
</comment>